<comment type="function">
    <text evidence="1 4">Secreted aspartic endopeptidase that allows assimilation of proteinaceous substrates. The scissile peptide bond is attacked by a nucleophilic water molecule activated by two aspartic residues in the active site. Shows a broad primary substrate specificity. Favors hydrophobic residues at the P1 and P1' positions, but also accepts a lysine residue in the P1 position, leading to the activation of trypsinogen and chymotrypsinogen A (By similarity). Hydrolyzes myoglobin, hemoglobin and other natural proteins. Hydrolyzes equine myoglobin between positions 'Met-1' and 'Gly-2', 'Lys-43' and 'Phe-44', and 'Leu-70' and 'Thr-71' (PubMed:23044751).</text>
</comment>
<comment type="catalytic activity">
    <reaction evidence="4">
        <text>Hydrolysis of proteins with broad specificity. Generally favors hydrophobic residues in P1 and P1', but also accepts Lys in P1, which leads to activation of trypsinogen. Does not clot milk.</text>
        <dbReference type="EC" id="3.4.23.18"/>
    </reaction>
</comment>
<comment type="activity regulation">
    <text evidence="4">Inhibited by the microbial peptide pepstatin A.</text>
</comment>
<comment type="biophysicochemical properties">
    <kinetics>
        <KM evidence="4">28 uM for equine myoglobin</KM>
        <KM evidence="4">7.9 uM for bovine hemoglobin</KM>
        <text evidence="4">kcat is 0.05 min(-1) with equine myoglobin as substrate and 0.0646 min(-1) with bovine hemoglobin as substrate.</text>
    </kinetics>
    <phDependence>
        <text evidence="4">Optimum pH is 2-4. Stable from pH 2 to pH 6.</text>
    </phDependence>
    <temperatureDependence>
        <text evidence="4">Optimum temperature is 60 degrees Celsius.</text>
    </temperatureDependence>
</comment>
<comment type="subunit">
    <text evidence="1">Monomer.</text>
</comment>
<comment type="subcellular location">
    <subcellularLocation>
        <location evidence="1">Secreted</location>
    </subcellularLocation>
</comment>
<comment type="miscellaneous">
    <text evidence="7">Used in Japanese cuisine. During the fermentation process of Katsuobushi - dried, smoked and fermented meat of the skipjack tuna (bonito) Katsuwonus pelamis - aspartic protease plays a role in the decolorisation of Katsuobushi from a dark reddish-brown to pale pink by the hydrolysis of heme proteins. The change in color gives Katsuobushi a higher ranking and price.</text>
</comment>
<comment type="similarity">
    <text evidence="3">Belongs to the peptidase A1 family.</text>
</comment>
<organism>
    <name type="scientific">Aspergillus pseudoglaucus</name>
    <name type="common">Eurotium repens</name>
    <dbReference type="NCBI Taxonomy" id="1405805"/>
    <lineage>
        <taxon>Eukaryota</taxon>
        <taxon>Fungi</taxon>
        <taxon>Dikarya</taxon>
        <taxon>Ascomycota</taxon>
        <taxon>Pezizomycotina</taxon>
        <taxon>Eurotiomycetes</taxon>
        <taxon>Eurotiomycetidae</taxon>
        <taxon>Eurotiales</taxon>
        <taxon>Aspergillaceae</taxon>
        <taxon>Aspergillus</taxon>
        <taxon>Aspergillus subgen. Aspergillus</taxon>
    </lineage>
</organism>
<gene>
    <name type="primary">pepA</name>
</gene>
<proteinExistence type="evidence at protein level"/>
<feature type="signal peptide" evidence="2">
    <location>
        <begin position="1"/>
        <end position="19"/>
    </location>
</feature>
<feature type="propeptide" id="PRO_0000438797" description="Activation peptide" evidence="5">
    <location>
        <begin position="20"/>
        <end position="67"/>
    </location>
</feature>
<feature type="chain" id="PRO_5007523443" description="Aspergillopepsin-1">
    <location>
        <begin position="68"/>
        <end position="390"/>
    </location>
</feature>
<feature type="domain" description="Peptidase A1" evidence="3">
    <location>
        <begin position="84"/>
        <end position="387"/>
    </location>
</feature>
<feature type="active site" evidence="3">
    <location>
        <position position="100"/>
    </location>
</feature>
<feature type="active site" evidence="3">
    <location>
        <position position="281"/>
    </location>
</feature>
<feature type="sequence conflict" description="In Ref. 2; AA sequence." evidence="6" ref="2">
    <original>TGS</original>
    <variation>AAA</variation>
    <location>
        <begin position="70"/>
        <end position="72"/>
    </location>
</feature>
<feature type="sequence conflict" description="In Ref. 2; AA sequence." evidence="6" ref="2">
    <original>TW</original>
    <variation>YP</variation>
    <location>
        <begin position="137"/>
        <end position="138"/>
    </location>
</feature>
<sequence length="390" mass="40623">MVNTSLLAALTAYAVAVAAAPTAPQVKGFSVNQVAVPKGVYRHPAAQLAKAYGKYHATVPTQVAAAAAATGSVTTNPTSNDEEYITQVTVGDDTLGLDFDTGSADLWVFSSQTPSSERSGHDYYTPGSSAQKIDGATWSISYGDGSSASGDVYKDKVTVGGVSYDSQAVESAEKVSSEFTQDTENDGLLGLAFSSINTVQPTPQKTFFDNVKSSLSEPIFAVALKHNAPGVYDFGYTDSSKYTGSITYTDVDNSQGFWSFTADGYSIGSDSSSDSITGIADTGTTLLLLDDSIVDAYYEQVNGASYDSSQGGYVFPSSASLPDFSVTIGDYTATVPGEYISFADVGNGQTFGGIQSNSGIGFSIFGDVFLKSQYVVFDASGPRLGFAAQA</sequence>
<accession>A0A146F0J0</accession>
<name>PEPA_ASPPE</name>
<reference key="1">
    <citation type="journal article" date="2017" name="J. Sci. Food Agric.">
        <title>Heterologous expression and characterization of the Aspergillus aspartic protease involved in the hydrolysis and decolorization of red-pigmented proteins.</title>
        <authorList>
            <person name="Takenaka S."/>
            <person name="Umeda M."/>
            <person name="Senba H."/>
            <person name="Koyama D."/>
            <person name="Tanaka K."/>
            <person name="Yoshida K.I."/>
            <person name="Doi M."/>
        </authorList>
    </citation>
    <scope>NUCLEOTIDE SEQUENCE [GENOMIC DNA]</scope>
    <scope>PROTEIN SEQUENCE OF 68-73; 133-145 AND 175-184</scope>
    <source>
        <strain>MK82</strain>
    </source>
</reference>
<reference key="2">
    <citation type="journal article" date="2013" name="J. Sci. Food Agric.">
        <title>Aspartic protease from Aspergillus (Eurotium) repens strain MK82 is involved in the hydrolysis and decolourisation of dried bonito (Katsuobushi).</title>
        <authorList>
            <person name="Aoki K."/>
            <person name="Matsubara S."/>
            <person name="Umeda M."/>
            <person name="Tachibana S."/>
            <person name="Doi M."/>
            <person name="Takenaka S."/>
        </authorList>
    </citation>
    <scope>PROTEIN SEQUENCE OF 68-73; 133-145 AND 175-184</scope>
    <scope>FUNCTION</scope>
    <scope>BIOPHYSICOCHEMICAL PROPERTIES</scope>
    <scope>ACTIVITY REGULATION</scope>
    <source>
        <strain>MK82</strain>
    </source>
</reference>
<evidence type="ECO:0000250" key="1">
    <source>
        <dbReference type="UniProtKB" id="Q12567"/>
    </source>
</evidence>
<evidence type="ECO:0000255" key="2"/>
<evidence type="ECO:0000255" key="3">
    <source>
        <dbReference type="PROSITE-ProRule" id="PRU01103"/>
    </source>
</evidence>
<evidence type="ECO:0000269" key="4">
    <source>
    </source>
</evidence>
<evidence type="ECO:0000269" key="5">
    <source>
    </source>
</evidence>
<evidence type="ECO:0000305" key="6"/>
<evidence type="ECO:0000305" key="7">
    <source>
    </source>
</evidence>
<dbReference type="EC" id="3.4.23.18" evidence="4"/>
<dbReference type="EMBL" id="LC101500">
    <property type="protein sequence ID" value="BAU68268.1"/>
    <property type="molecule type" value="Genomic_DNA"/>
</dbReference>
<dbReference type="SMR" id="A0A146F0J0"/>
<dbReference type="BRENDA" id="3.4.23.18">
    <property type="organism ID" value="527"/>
</dbReference>
<dbReference type="GO" id="GO:0005576">
    <property type="term" value="C:extracellular region"/>
    <property type="evidence" value="ECO:0007669"/>
    <property type="project" value="UniProtKB-SubCell"/>
</dbReference>
<dbReference type="GO" id="GO:0004190">
    <property type="term" value="F:aspartic-type endopeptidase activity"/>
    <property type="evidence" value="ECO:0007669"/>
    <property type="project" value="UniProtKB-KW"/>
</dbReference>
<dbReference type="GO" id="GO:0006508">
    <property type="term" value="P:proteolysis"/>
    <property type="evidence" value="ECO:0007669"/>
    <property type="project" value="UniProtKB-KW"/>
</dbReference>
<dbReference type="CDD" id="cd06097">
    <property type="entry name" value="Aspergillopepsin_like"/>
    <property type="match status" value="1"/>
</dbReference>
<dbReference type="FunFam" id="2.40.70.10:FF:000024">
    <property type="entry name" value="Endothiapepsin"/>
    <property type="match status" value="1"/>
</dbReference>
<dbReference type="FunFam" id="2.40.70.10:FF:000026">
    <property type="entry name" value="Endothiapepsin"/>
    <property type="match status" value="1"/>
</dbReference>
<dbReference type="Gene3D" id="2.40.70.10">
    <property type="entry name" value="Acid Proteases"/>
    <property type="match status" value="2"/>
</dbReference>
<dbReference type="InterPro" id="IPR001461">
    <property type="entry name" value="Aspartic_peptidase_A1"/>
</dbReference>
<dbReference type="InterPro" id="IPR001969">
    <property type="entry name" value="Aspartic_peptidase_AS"/>
</dbReference>
<dbReference type="InterPro" id="IPR034163">
    <property type="entry name" value="Aspergillopepsin-like_cat_dom"/>
</dbReference>
<dbReference type="InterPro" id="IPR033121">
    <property type="entry name" value="PEPTIDASE_A1"/>
</dbReference>
<dbReference type="InterPro" id="IPR021109">
    <property type="entry name" value="Peptidase_aspartic_dom_sf"/>
</dbReference>
<dbReference type="PANTHER" id="PTHR47966:SF2">
    <property type="entry name" value="ASPERGILLOPEPSIN-1-RELATED"/>
    <property type="match status" value="1"/>
</dbReference>
<dbReference type="PANTHER" id="PTHR47966">
    <property type="entry name" value="BETA-SITE APP-CLEAVING ENZYME, ISOFORM A-RELATED"/>
    <property type="match status" value="1"/>
</dbReference>
<dbReference type="Pfam" id="PF00026">
    <property type="entry name" value="Asp"/>
    <property type="match status" value="1"/>
</dbReference>
<dbReference type="PRINTS" id="PR00792">
    <property type="entry name" value="PEPSIN"/>
</dbReference>
<dbReference type="SUPFAM" id="SSF50630">
    <property type="entry name" value="Acid proteases"/>
    <property type="match status" value="1"/>
</dbReference>
<dbReference type="PROSITE" id="PS00141">
    <property type="entry name" value="ASP_PROTEASE"/>
    <property type="match status" value="2"/>
</dbReference>
<dbReference type="PROSITE" id="PS51767">
    <property type="entry name" value="PEPTIDASE_A1"/>
    <property type="match status" value="1"/>
</dbReference>
<protein>
    <recommendedName>
        <fullName evidence="6">Aspergillopepsin-1</fullName>
        <ecNumber evidence="4">3.4.23.18</ecNumber>
    </recommendedName>
    <alternativeName>
        <fullName>Aspartic protease pepA</fullName>
    </alternativeName>
    <alternativeName>
        <fullName>Aspergillopepsin I</fullName>
    </alternativeName>
    <alternativeName>
        <fullName>Aspergillopeptidase A</fullName>
    </alternativeName>
</protein>
<keyword id="KW-0064">Aspartyl protease</keyword>
<keyword id="KW-0903">Direct protein sequencing</keyword>
<keyword id="KW-0378">Hydrolase</keyword>
<keyword id="KW-0645">Protease</keyword>
<keyword id="KW-0964">Secreted</keyword>
<keyword id="KW-0732">Signal</keyword>
<keyword id="KW-0865">Zymogen</keyword>